<gene>
    <name evidence="1" type="primary">rplT</name>
    <name type="ordered locus">Oant_0800</name>
</gene>
<comment type="function">
    <text evidence="1">Binds directly to 23S ribosomal RNA and is necessary for the in vitro assembly process of the 50S ribosomal subunit. It is not involved in the protein synthesizing functions of that subunit.</text>
</comment>
<comment type="similarity">
    <text evidence="1">Belongs to the bacterial ribosomal protein bL20 family.</text>
</comment>
<organism>
    <name type="scientific">Brucella anthropi (strain ATCC 49188 / DSM 6882 / CCUG 24695 / JCM 21032 / LMG 3331 / NBRC 15819 / NCTC 12168 / Alc 37)</name>
    <name type="common">Ochrobactrum anthropi</name>
    <dbReference type="NCBI Taxonomy" id="439375"/>
    <lineage>
        <taxon>Bacteria</taxon>
        <taxon>Pseudomonadati</taxon>
        <taxon>Pseudomonadota</taxon>
        <taxon>Alphaproteobacteria</taxon>
        <taxon>Hyphomicrobiales</taxon>
        <taxon>Brucellaceae</taxon>
        <taxon>Brucella/Ochrobactrum group</taxon>
        <taxon>Brucella</taxon>
    </lineage>
</organism>
<feature type="chain" id="PRO_1000049024" description="Large ribosomal subunit protein bL20">
    <location>
        <begin position="1"/>
        <end position="134"/>
    </location>
</feature>
<proteinExistence type="inferred from homology"/>
<accession>A6WX18</accession>
<dbReference type="EMBL" id="CP000758">
    <property type="protein sequence ID" value="ABS13522.1"/>
    <property type="molecule type" value="Genomic_DNA"/>
</dbReference>
<dbReference type="RefSeq" id="WP_006468099.1">
    <property type="nucleotide sequence ID" value="NC_009667.1"/>
</dbReference>
<dbReference type="SMR" id="A6WX18"/>
<dbReference type="STRING" id="439375.Oant_0800"/>
<dbReference type="GeneID" id="61318753"/>
<dbReference type="KEGG" id="oan:Oant_0800"/>
<dbReference type="eggNOG" id="COG0292">
    <property type="taxonomic scope" value="Bacteria"/>
</dbReference>
<dbReference type="HOGENOM" id="CLU_123265_0_1_5"/>
<dbReference type="PhylomeDB" id="A6WX18"/>
<dbReference type="Proteomes" id="UP000002301">
    <property type="component" value="Chromosome 1"/>
</dbReference>
<dbReference type="GO" id="GO:1990904">
    <property type="term" value="C:ribonucleoprotein complex"/>
    <property type="evidence" value="ECO:0007669"/>
    <property type="project" value="UniProtKB-KW"/>
</dbReference>
<dbReference type="GO" id="GO:0005840">
    <property type="term" value="C:ribosome"/>
    <property type="evidence" value="ECO:0007669"/>
    <property type="project" value="UniProtKB-KW"/>
</dbReference>
<dbReference type="GO" id="GO:0019843">
    <property type="term" value="F:rRNA binding"/>
    <property type="evidence" value="ECO:0007669"/>
    <property type="project" value="UniProtKB-UniRule"/>
</dbReference>
<dbReference type="GO" id="GO:0003735">
    <property type="term" value="F:structural constituent of ribosome"/>
    <property type="evidence" value="ECO:0007669"/>
    <property type="project" value="InterPro"/>
</dbReference>
<dbReference type="GO" id="GO:0000027">
    <property type="term" value="P:ribosomal large subunit assembly"/>
    <property type="evidence" value="ECO:0007669"/>
    <property type="project" value="UniProtKB-UniRule"/>
</dbReference>
<dbReference type="GO" id="GO:0006412">
    <property type="term" value="P:translation"/>
    <property type="evidence" value="ECO:0007669"/>
    <property type="project" value="InterPro"/>
</dbReference>
<dbReference type="CDD" id="cd07026">
    <property type="entry name" value="Ribosomal_L20"/>
    <property type="match status" value="1"/>
</dbReference>
<dbReference type="FunFam" id="1.10.1900.20:FF:000001">
    <property type="entry name" value="50S ribosomal protein L20"/>
    <property type="match status" value="1"/>
</dbReference>
<dbReference type="Gene3D" id="6.10.160.10">
    <property type="match status" value="1"/>
</dbReference>
<dbReference type="Gene3D" id="1.10.1900.20">
    <property type="entry name" value="Ribosomal protein L20"/>
    <property type="match status" value="1"/>
</dbReference>
<dbReference type="HAMAP" id="MF_00382">
    <property type="entry name" value="Ribosomal_bL20"/>
    <property type="match status" value="1"/>
</dbReference>
<dbReference type="InterPro" id="IPR005813">
    <property type="entry name" value="Ribosomal_bL20"/>
</dbReference>
<dbReference type="InterPro" id="IPR049946">
    <property type="entry name" value="RIBOSOMAL_L20_CS"/>
</dbReference>
<dbReference type="InterPro" id="IPR035566">
    <property type="entry name" value="Ribosomal_protein_bL20_C"/>
</dbReference>
<dbReference type="NCBIfam" id="TIGR01032">
    <property type="entry name" value="rplT_bact"/>
    <property type="match status" value="1"/>
</dbReference>
<dbReference type="PANTHER" id="PTHR10986">
    <property type="entry name" value="39S RIBOSOMAL PROTEIN L20"/>
    <property type="match status" value="1"/>
</dbReference>
<dbReference type="Pfam" id="PF00453">
    <property type="entry name" value="Ribosomal_L20"/>
    <property type="match status" value="1"/>
</dbReference>
<dbReference type="PRINTS" id="PR00062">
    <property type="entry name" value="RIBOSOMALL20"/>
</dbReference>
<dbReference type="SUPFAM" id="SSF74731">
    <property type="entry name" value="Ribosomal protein L20"/>
    <property type="match status" value="1"/>
</dbReference>
<dbReference type="PROSITE" id="PS00937">
    <property type="entry name" value="RIBOSOMAL_L20"/>
    <property type="match status" value="1"/>
</dbReference>
<protein>
    <recommendedName>
        <fullName evidence="1">Large ribosomal subunit protein bL20</fullName>
    </recommendedName>
    <alternativeName>
        <fullName evidence="2">50S ribosomal protein L20</fullName>
    </alternativeName>
</protein>
<evidence type="ECO:0000255" key="1">
    <source>
        <dbReference type="HAMAP-Rule" id="MF_00382"/>
    </source>
</evidence>
<evidence type="ECO:0000305" key="2"/>
<keyword id="KW-1185">Reference proteome</keyword>
<keyword id="KW-0687">Ribonucleoprotein</keyword>
<keyword id="KW-0689">Ribosomal protein</keyword>
<keyword id="KW-0694">RNA-binding</keyword>
<keyword id="KW-0699">rRNA-binding</keyword>
<name>RL20_BRUA4</name>
<reference key="1">
    <citation type="journal article" date="2011" name="J. Bacteriol.">
        <title>Genome of Ochrobactrum anthropi ATCC 49188 T, a versatile opportunistic pathogen and symbiont of several eukaryotic hosts.</title>
        <authorList>
            <person name="Chain P.S."/>
            <person name="Lang D.M."/>
            <person name="Comerci D.J."/>
            <person name="Malfatti S.A."/>
            <person name="Vergez L.M."/>
            <person name="Shin M."/>
            <person name="Ugalde R.A."/>
            <person name="Garcia E."/>
            <person name="Tolmasky M.E."/>
        </authorList>
    </citation>
    <scope>NUCLEOTIDE SEQUENCE [LARGE SCALE GENOMIC DNA]</scope>
    <source>
        <strain>ATCC 49188 / DSM 6882 / CCUG 24695 / JCM 21032 / LMG 3331 / NBRC 15819 / NCTC 12168 / Alc 37</strain>
    </source>
</reference>
<sequence>MARVKRGVTAHAKHKKVLDQAAGFRGRRKNTIRTAKAAVDRSKQYAYRDRKNRKRSFRALWIQRINAAVREQGLTYGRFIDGLAKAGIEIDRKVLSDIAIHEPDAFGALVASAKKALEYLKNTETPNAFEGAVR</sequence>